<proteinExistence type="inferred from homology"/>
<organism>
    <name type="scientific">Escherichia coli O6:H1 (strain CFT073 / ATCC 700928 / UPEC)</name>
    <dbReference type="NCBI Taxonomy" id="199310"/>
    <lineage>
        <taxon>Bacteria</taxon>
        <taxon>Pseudomonadati</taxon>
        <taxon>Pseudomonadota</taxon>
        <taxon>Gammaproteobacteria</taxon>
        <taxon>Enterobacterales</taxon>
        <taxon>Enterobacteriaceae</taxon>
        <taxon>Escherichia</taxon>
    </lineage>
</organism>
<evidence type="ECO:0000250" key="1"/>
<evidence type="ECO:0000255" key="2">
    <source>
        <dbReference type="HAMAP-Rule" id="MF_01640"/>
    </source>
</evidence>
<evidence type="ECO:0000305" key="3"/>
<keyword id="KW-0963">Cytoplasm</keyword>
<keyword id="KW-0520">NAD</keyword>
<keyword id="KW-0560">Oxidoreductase</keyword>
<keyword id="KW-0664">Pyridoxine biosynthesis</keyword>
<keyword id="KW-1185">Reference proteome</keyword>
<name>E4PD_ECOL6</name>
<sequence length="339" mass="37299">MTVRVAINGFGRIGRNVVRALYESGRRAEITVVAINELADAAGMAHLLKYDTSHGRFAWEVRQERDQLFVGDDAIRVLHERSLQSLPWRELGVDVVLDCTGVYGSREHGEAHIAAGAKKVLFSHPGSNDLDATVVYGVNQDQLRAEHRIVSNASCTTNCIIPVIKLLDDAYGIESGTVTTIHSAMHDQQVIDAYHPDLRRTRAASQSIIPVDTKLAAGITRFFPQFNDRFEAIAVRVPTINVTAIDLSVTVKKPVKANEVNLLLQKAAQGAFHGIVDYTELPLVSVDFNHDPHSAIVDGTQTRVSGAHLIKTLVWCDNEWGFANRMLDTTLAMATVAFR</sequence>
<comment type="function">
    <text evidence="2">Catalyzes the NAD-dependent conversion of D-erythrose 4-phosphate to 4-phosphoerythronate.</text>
</comment>
<comment type="catalytic activity">
    <reaction evidence="2">
        <text>D-erythrose 4-phosphate + NAD(+) + H2O = 4-phospho-D-erythronate + NADH + 2 H(+)</text>
        <dbReference type="Rhea" id="RHEA:12056"/>
        <dbReference type="ChEBI" id="CHEBI:15377"/>
        <dbReference type="ChEBI" id="CHEBI:15378"/>
        <dbReference type="ChEBI" id="CHEBI:16897"/>
        <dbReference type="ChEBI" id="CHEBI:57540"/>
        <dbReference type="ChEBI" id="CHEBI:57945"/>
        <dbReference type="ChEBI" id="CHEBI:58766"/>
        <dbReference type="EC" id="1.2.1.72"/>
    </reaction>
</comment>
<comment type="pathway">
    <text evidence="2">Cofactor biosynthesis; pyridoxine 5'-phosphate biosynthesis; pyridoxine 5'-phosphate from D-erythrose 4-phosphate: step 1/5.</text>
</comment>
<comment type="subunit">
    <text evidence="2">Homotetramer.</text>
</comment>
<comment type="subcellular location">
    <subcellularLocation>
        <location evidence="2">Cytoplasm</location>
    </subcellularLocation>
</comment>
<comment type="similarity">
    <text evidence="2">Belongs to the glyceraldehyde-3-phosphate dehydrogenase family. Epd subfamily.</text>
</comment>
<comment type="sequence caution" evidence="3">
    <conflict type="erroneous initiation">
        <sequence resource="EMBL-CDS" id="AAN81953"/>
    </conflict>
</comment>
<feature type="initiator methionine" description="Removed" evidence="1">
    <location>
        <position position="1"/>
    </location>
</feature>
<feature type="chain" id="PRO_0000145655" description="D-erythrose-4-phosphate dehydrogenase">
    <location>
        <begin position="2"/>
        <end position="339"/>
    </location>
</feature>
<feature type="active site" description="Nucleophile" evidence="2">
    <location>
        <position position="155"/>
    </location>
</feature>
<feature type="binding site" evidence="2">
    <location>
        <begin position="12"/>
        <end position="13"/>
    </location>
    <ligand>
        <name>NAD(+)</name>
        <dbReference type="ChEBI" id="CHEBI:57540"/>
    </ligand>
</feature>
<feature type="binding site" evidence="2">
    <location>
        <position position="81"/>
    </location>
    <ligand>
        <name>NAD(+)</name>
        <dbReference type="ChEBI" id="CHEBI:57540"/>
    </ligand>
</feature>
<feature type="binding site" evidence="2">
    <location>
        <begin position="154"/>
        <end position="156"/>
    </location>
    <ligand>
        <name>substrate</name>
    </ligand>
</feature>
<feature type="binding site" evidence="2">
    <location>
        <position position="200"/>
    </location>
    <ligand>
        <name>substrate</name>
    </ligand>
</feature>
<feature type="binding site" evidence="2">
    <location>
        <begin position="213"/>
        <end position="214"/>
    </location>
    <ligand>
        <name>substrate</name>
    </ligand>
</feature>
<feature type="binding site" evidence="2">
    <location>
        <position position="236"/>
    </location>
    <ligand>
        <name>substrate</name>
    </ligand>
</feature>
<feature type="binding site" evidence="2">
    <location>
        <position position="318"/>
    </location>
    <ligand>
        <name>NAD(+)</name>
        <dbReference type="ChEBI" id="CHEBI:57540"/>
    </ligand>
</feature>
<feature type="site" description="Activates thiol group during catalysis" evidence="2">
    <location>
        <position position="182"/>
    </location>
</feature>
<accession>P0A9B7</accession>
<accession>P11603</accession>
<dbReference type="EC" id="1.2.1.72" evidence="2"/>
<dbReference type="EMBL" id="AE014075">
    <property type="protein sequence ID" value="AAN81953.1"/>
    <property type="status" value="ALT_INIT"/>
    <property type="molecule type" value="Genomic_DNA"/>
</dbReference>
<dbReference type="RefSeq" id="WP_000218480.1">
    <property type="nucleotide sequence ID" value="NZ_CP051263.1"/>
</dbReference>
<dbReference type="SMR" id="P0A9B7"/>
<dbReference type="STRING" id="199310.c3505"/>
<dbReference type="GeneID" id="93779071"/>
<dbReference type="KEGG" id="ecc:c3505"/>
<dbReference type="eggNOG" id="COG0057">
    <property type="taxonomic scope" value="Bacteria"/>
</dbReference>
<dbReference type="HOGENOM" id="CLU_030140_0_2_6"/>
<dbReference type="UniPathway" id="UPA00244">
    <property type="reaction ID" value="UER00309"/>
</dbReference>
<dbReference type="Proteomes" id="UP000001410">
    <property type="component" value="Chromosome"/>
</dbReference>
<dbReference type="GO" id="GO:0005737">
    <property type="term" value="C:cytoplasm"/>
    <property type="evidence" value="ECO:0007669"/>
    <property type="project" value="UniProtKB-SubCell"/>
</dbReference>
<dbReference type="GO" id="GO:0048001">
    <property type="term" value="F:erythrose-4-phosphate dehydrogenase activity"/>
    <property type="evidence" value="ECO:0007669"/>
    <property type="project" value="UniProtKB-UniRule"/>
</dbReference>
<dbReference type="GO" id="GO:0051287">
    <property type="term" value="F:NAD binding"/>
    <property type="evidence" value="ECO:0007669"/>
    <property type="project" value="InterPro"/>
</dbReference>
<dbReference type="GO" id="GO:0042823">
    <property type="term" value="P:pyridoxal phosphate biosynthetic process"/>
    <property type="evidence" value="ECO:0007669"/>
    <property type="project" value="UniProtKB-UniRule"/>
</dbReference>
<dbReference type="GO" id="GO:0008615">
    <property type="term" value="P:pyridoxine biosynthetic process"/>
    <property type="evidence" value="ECO:0007669"/>
    <property type="project" value="UniProtKB-UniRule"/>
</dbReference>
<dbReference type="CDD" id="cd23937">
    <property type="entry name" value="GAPDH_C_E4PDH"/>
    <property type="match status" value="1"/>
</dbReference>
<dbReference type="CDD" id="cd17892">
    <property type="entry name" value="GAPDH_N_E4PDH"/>
    <property type="match status" value="1"/>
</dbReference>
<dbReference type="FunFam" id="3.30.360.10:FF:000007">
    <property type="entry name" value="D-erythrose-4-phosphate dehydrogenase"/>
    <property type="match status" value="1"/>
</dbReference>
<dbReference type="FunFam" id="3.40.50.720:FF:000001">
    <property type="entry name" value="Glyceraldehyde-3-phosphate dehydrogenase"/>
    <property type="match status" value="1"/>
</dbReference>
<dbReference type="Gene3D" id="3.30.360.10">
    <property type="entry name" value="Dihydrodipicolinate Reductase, domain 2"/>
    <property type="match status" value="1"/>
</dbReference>
<dbReference type="Gene3D" id="3.40.50.720">
    <property type="entry name" value="NAD(P)-binding Rossmann-like Domain"/>
    <property type="match status" value="1"/>
</dbReference>
<dbReference type="HAMAP" id="MF_01640">
    <property type="entry name" value="E4P_dehydrog"/>
    <property type="match status" value="1"/>
</dbReference>
<dbReference type="InterPro" id="IPR006422">
    <property type="entry name" value="E4P_DH_bac"/>
</dbReference>
<dbReference type="InterPro" id="IPR020831">
    <property type="entry name" value="GlycerAld/Erythrose_P_DH"/>
</dbReference>
<dbReference type="InterPro" id="IPR020830">
    <property type="entry name" value="GlycerAld_3-P_DH_AS"/>
</dbReference>
<dbReference type="InterPro" id="IPR020829">
    <property type="entry name" value="GlycerAld_3-P_DH_cat"/>
</dbReference>
<dbReference type="InterPro" id="IPR020828">
    <property type="entry name" value="GlycerAld_3-P_DH_NAD(P)-bd"/>
</dbReference>
<dbReference type="InterPro" id="IPR036291">
    <property type="entry name" value="NAD(P)-bd_dom_sf"/>
</dbReference>
<dbReference type="NCBIfam" id="TIGR01532">
    <property type="entry name" value="E4PD_g-proteo"/>
    <property type="match status" value="1"/>
</dbReference>
<dbReference type="NCBIfam" id="NF010058">
    <property type="entry name" value="PRK13535.1"/>
    <property type="match status" value="1"/>
</dbReference>
<dbReference type="PANTHER" id="PTHR43148">
    <property type="entry name" value="GLYCERALDEHYDE-3-PHOSPHATE DEHYDROGENASE 2"/>
    <property type="match status" value="1"/>
</dbReference>
<dbReference type="Pfam" id="PF02800">
    <property type="entry name" value="Gp_dh_C"/>
    <property type="match status" value="1"/>
</dbReference>
<dbReference type="Pfam" id="PF00044">
    <property type="entry name" value="Gp_dh_N"/>
    <property type="match status" value="1"/>
</dbReference>
<dbReference type="PIRSF" id="PIRSF000149">
    <property type="entry name" value="GAP_DH"/>
    <property type="match status" value="1"/>
</dbReference>
<dbReference type="PRINTS" id="PR00078">
    <property type="entry name" value="G3PDHDRGNASE"/>
</dbReference>
<dbReference type="SMART" id="SM00846">
    <property type="entry name" value="Gp_dh_N"/>
    <property type="match status" value="1"/>
</dbReference>
<dbReference type="SUPFAM" id="SSF55347">
    <property type="entry name" value="Glyceraldehyde-3-phosphate dehydrogenase-like, C-terminal domain"/>
    <property type="match status" value="1"/>
</dbReference>
<dbReference type="SUPFAM" id="SSF51735">
    <property type="entry name" value="NAD(P)-binding Rossmann-fold domains"/>
    <property type="match status" value="1"/>
</dbReference>
<dbReference type="PROSITE" id="PS00071">
    <property type="entry name" value="GAPDH"/>
    <property type="match status" value="1"/>
</dbReference>
<gene>
    <name evidence="2" type="primary">epd</name>
    <name type="ordered locus">c3505</name>
</gene>
<protein>
    <recommendedName>
        <fullName evidence="2">D-erythrose-4-phosphate dehydrogenase</fullName>
        <shortName evidence="2">E4PDH</shortName>
        <ecNumber evidence="2">1.2.1.72</ecNumber>
    </recommendedName>
</protein>
<reference key="1">
    <citation type="journal article" date="2002" name="Proc. Natl. Acad. Sci. U.S.A.">
        <title>Extensive mosaic structure revealed by the complete genome sequence of uropathogenic Escherichia coli.</title>
        <authorList>
            <person name="Welch R.A."/>
            <person name="Burland V."/>
            <person name="Plunkett G. III"/>
            <person name="Redford P."/>
            <person name="Roesch P."/>
            <person name="Rasko D."/>
            <person name="Buckles E.L."/>
            <person name="Liou S.-R."/>
            <person name="Boutin A."/>
            <person name="Hackett J."/>
            <person name="Stroud D."/>
            <person name="Mayhew G.F."/>
            <person name="Rose D.J."/>
            <person name="Zhou S."/>
            <person name="Schwartz D.C."/>
            <person name="Perna N.T."/>
            <person name="Mobley H.L.T."/>
            <person name="Donnenberg M.S."/>
            <person name="Blattner F.R."/>
        </authorList>
    </citation>
    <scope>NUCLEOTIDE SEQUENCE [LARGE SCALE GENOMIC DNA]</scope>
    <source>
        <strain>CFT073 / ATCC 700928 / UPEC</strain>
    </source>
</reference>